<keyword id="KW-1185">Reference proteome</keyword>
<keyword id="KW-0677">Repeat</keyword>
<keyword id="KW-0853">WD repeat</keyword>
<protein>
    <recommendedName>
        <fullName evidence="3">WD repeat-containing protein wdr-5.1</fullName>
    </recommendedName>
</protein>
<dbReference type="EMBL" id="HE601123">
    <property type="protein sequence ID" value="CAP28887.1"/>
    <property type="molecule type" value="Genomic_DNA"/>
</dbReference>
<dbReference type="SMR" id="A8X8C6"/>
<dbReference type="FunCoup" id="A8X8C6">
    <property type="interactions" value="2127"/>
</dbReference>
<dbReference type="STRING" id="6238.A8X8C6"/>
<dbReference type="EnsemblMetazoa" id="CBG09206.1">
    <property type="protein sequence ID" value="CBG09206.1"/>
    <property type="gene ID" value="WBGene00030836"/>
</dbReference>
<dbReference type="KEGG" id="cbr:CBG_09206"/>
<dbReference type="CTD" id="8583978"/>
<dbReference type="WormBase" id="CBG09206">
    <property type="protein sequence ID" value="CBP08209"/>
    <property type="gene ID" value="WBGene00030836"/>
    <property type="gene designation" value="wdr-5.1"/>
</dbReference>
<dbReference type="eggNOG" id="KOG0266">
    <property type="taxonomic scope" value="Eukaryota"/>
</dbReference>
<dbReference type="HOGENOM" id="CLU_000288_57_1_1"/>
<dbReference type="InParanoid" id="A8X8C6"/>
<dbReference type="OMA" id="CKGHDTA"/>
<dbReference type="OrthoDB" id="674604at2759"/>
<dbReference type="Proteomes" id="UP000008549">
    <property type="component" value="Unassembled WGS sequence"/>
</dbReference>
<dbReference type="GO" id="GO:0005737">
    <property type="term" value="C:cytoplasm"/>
    <property type="evidence" value="ECO:0007669"/>
    <property type="project" value="EnsemblMetazoa"/>
</dbReference>
<dbReference type="GO" id="GO:0044666">
    <property type="term" value="C:MLL3/4 complex"/>
    <property type="evidence" value="ECO:0007669"/>
    <property type="project" value="EnsemblMetazoa"/>
</dbReference>
<dbReference type="GO" id="GO:0048188">
    <property type="term" value="C:Set1C/COMPASS complex"/>
    <property type="evidence" value="ECO:0000318"/>
    <property type="project" value="GO_Central"/>
</dbReference>
<dbReference type="GO" id="GO:0042393">
    <property type="term" value="F:histone binding"/>
    <property type="evidence" value="ECO:0000318"/>
    <property type="project" value="GO_Central"/>
</dbReference>
<dbReference type="GO" id="GO:0061629">
    <property type="term" value="F:RNA polymerase II-specific DNA-binding transcription factor binding"/>
    <property type="evidence" value="ECO:0007669"/>
    <property type="project" value="EnsemblMetazoa"/>
</dbReference>
<dbReference type="GO" id="GO:0008340">
    <property type="term" value="P:determination of adult lifespan"/>
    <property type="evidence" value="ECO:0007669"/>
    <property type="project" value="EnsemblMetazoa"/>
</dbReference>
<dbReference type="GO" id="GO:0012501">
    <property type="term" value="P:programmed cell death"/>
    <property type="evidence" value="ECO:0007669"/>
    <property type="project" value="EnsemblMetazoa"/>
</dbReference>
<dbReference type="GO" id="GO:0060290">
    <property type="term" value="P:transdifferentiation"/>
    <property type="evidence" value="ECO:0007669"/>
    <property type="project" value="EnsemblMetazoa"/>
</dbReference>
<dbReference type="CDD" id="cd00200">
    <property type="entry name" value="WD40"/>
    <property type="match status" value="1"/>
</dbReference>
<dbReference type="FunFam" id="2.130.10.10:FF:000228">
    <property type="entry name" value="COMPASS-like H3K4 histone methylase component WDR5A"/>
    <property type="match status" value="1"/>
</dbReference>
<dbReference type="Gene3D" id="2.130.10.10">
    <property type="entry name" value="YVTN repeat-like/Quinoprotein amine dehydrogenase"/>
    <property type="match status" value="1"/>
</dbReference>
<dbReference type="InterPro" id="IPR020472">
    <property type="entry name" value="G-protein_beta_WD-40_rep"/>
</dbReference>
<dbReference type="InterPro" id="IPR015943">
    <property type="entry name" value="WD40/YVTN_repeat-like_dom_sf"/>
</dbReference>
<dbReference type="InterPro" id="IPR019775">
    <property type="entry name" value="WD40_repeat_CS"/>
</dbReference>
<dbReference type="InterPro" id="IPR036322">
    <property type="entry name" value="WD40_repeat_dom_sf"/>
</dbReference>
<dbReference type="InterPro" id="IPR001680">
    <property type="entry name" value="WD40_rpt"/>
</dbReference>
<dbReference type="PANTHER" id="PTHR22847:SF637">
    <property type="entry name" value="WD REPEAT DOMAIN 5B"/>
    <property type="match status" value="1"/>
</dbReference>
<dbReference type="PANTHER" id="PTHR22847">
    <property type="entry name" value="WD40 REPEAT PROTEIN"/>
    <property type="match status" value="1"/>
</dbReference>
<dbReference type="Pfam" id="PF25175">
    <property type="entry name" value="Beta-prop_WDR5"/>
    <property type="match status" value="1"/>
</dbReference>
<dbReference type="PIRSF" id="PIRSF002394">
    <property type="entry name" value="GN-bd_beta"/>
    <property type="match status" value="1"/>
</dbReference>
<dbReference type="PRINTS" id="PR00320">
    <property type="entry name" value="GPROTEINBRPT"/>
</dbReference>
<dbReference type="SMART" id="SM00320">
    <property type="entry name" value="WD40"/>
    <property type="match status" value="7"/>
</dbReference>
<dbReference type="SUPFAM" id="SSF50978">
    <property type="entry name" value="WD40 repeat-like"/>
    <property type="match status" value="1"/>
</dbReference>
<dbReference type="PROSITE" id="PS00678">
    <property type="entry name" value="WD_REPEATS_1"/>
    <property type="match status" value="5"/>
</dbReference>
<dbReference type="PROSITE" id="PS50082">
    <property type="entry name" value="WD_REPEATS_2"/>
    <property type="match status" value="6"/>
</dbReference>
<dbReference type="PROSITE" id="PS50294">
    <property type="entry name" value="WD_REPEATS_REGION"/>
    <property type="match status" value="1"/>
</dbReference>
<sequence>MDPAQNQPNTEPPAAPAVEEAQGVNNSEAEAPAPAALSSVSPANPPITAVPEATAPTTSQESTIPGAGYKLISTIEGHTKSISAVKFSPCGKFLGTSSADKTVKIWNMSDLSCERTLTGHKLGVNDFAWSADSKSIVTASDDKTLKIYEVPTVKMAKTLKGHTNYVFCCNFNPQSSLVVSGSFDESVRIWDVRTGMCVKTLPAHSDPVSAVSFNRDGSLITSGSYDGLVRIWDTANGQCVKTLVDDENPPVAFVKFSPNGKYILSSNLDNTLKLWDFGKGKTLKQYQGHENNKYCIFANFSVTGGKWIISGSEDCKIYVWNLQTKEVVQSLEGHTQAVIASDCHPMQNMIASGALEPDNTIRIWRSDS</sequence>
<evidence type="ECO:0000255" key="1"/>
<evidence type="ECO:0000256" key="2">
    <source>
        <dbReference type="SAM" id="MobiDB-lite"/>
    </source>
</evidence>
<evidence type="ECO:0000305" key="3"/>
<evidence type="ECO:0000312" key="4">
    <source>
        <dbReference type="EMBL" id="CAP28887.1"/>
    </source>
</evidence>
<accession>A8X8C6</accession>
<organism>
    <name type="scientific">Caenorhabditis briggsae</name>
    <dbReference type="NCBI Taxonomy" id="6238"/>
    <lineage>
        <taxon>Eukaryota</taxon>
        <taxon>Metazoa</taxon>
        <taxon>Ecdysozoa</taxon>
        <taxon>Nematoda</taxon>
        <taxon>Chromadorea</taxon>
        <taxon>Rhabditida</taxon>
        <taxon>Rhabditina</taxon>
        <taxon>Rhabditomorpha</taxon>
        <taxon>Rhabditoidea</taxon>
        <taxon>Rhabditidae</taxon>
        <taxon>Peloderinae</taxon>
        <taxon>Caenorhabditis</taxon>
    </lineage>
</organism>
<gene>
    <name evidence="4" type="primary">wdr-5.1</name>
    <name evidence="4" type="ORF">CBG09206</name>
</gene>
<name>TG125_CAEBR</name>
<reference evidence="4" key="1">
    <citation type="journal article" date="2003" name="PLoS Biol.">
        <title>The genome sequence of Caenorhabditis briggsae: a platform for comparative genomics.</title>
        <authorList>
            <person name="Stein L.D."/>
            <person name="Bao Z."/>
            <person name="Blasiar D."/>
            <person name="Blumenthal T."/>
            <person name="Brent M.R."/>
            <person name="Chen N."/>
            <person name="Chinwalla A."/>
            <person name="Clarke L."/>
            <person name="Clee C."/>
            <person name="Coghlan A."/>
            <person name="Coulson A."/>
            <person name="D'Eustachio P."/>
            <person name="Fitch D.H.A."/>
            <person name="Fulton L.A."/>
            <person name="Fulton R.E."/>
            <person name="Griffiths-Jones S."/>
            <person name="Harris T.W."/>
            <person name="Hillier L.W."/>
            <person name="Kamath R."/>
            <person name="Kuwabara P.E."/>
            <person name="Mardis E.R."/>
            <person name="Marra M.A."/>
            <person name="Miner T.L."/>
            <person name="Minx P."/>
            <person name="Mullikin J.C."/>
            <person name="Plumb R.W."/>
            <person name="Rogers J."/>
            <person name="Schein J.E."/>
            <person name="Sohrmann M."/>
            <person name="Spieth J."/>
            <person name="Stajich J.E."/>
            <person name="Wei C."/>
            <person name="Willey D."/>
            <person name="Wilson R.K."/>
            <person name="Durbin R.M."/>
            <person name="Waterston R.H."/>
        </authorList>
    </citation>
    <scope>NUCLEOTIDE SEQUENCE [LARGE SCALE GENOMIC DNA]</scope>
    <source>
        <strain evidence="4">AF16</strain>
    </source>
</reference>
<feature type="chain" id="PRO_0000353202" description="WD repeat-containing protein wdr-5.1">
    <location>
        <begin position="1"/>
        <end position="368"/>
    </location>
</feature>
<feature type="repeat" description="WD 1" evidence="1">
    <location>
        <begin position="77"/>
        <end position="116"/>
    </location>
</feature>
<feature type="repeat" description="WD 2" evidence="1">
    <location>
        <begin position="119"/>
        <end position="158"/>
    </location>
</feature>
<feature type="repeat" description="WD 3" evidence="1">
    <location>
        <begin position="161"/>
        <end position="200"/>
    </location>
</feature>
<feature type="repeat" description="WD 4" evidence="1">
    <location>
        <begin position="203"/>
        <end position="242"/>
    </location>
</feature>
<feature type="repeat" description="WD 5" evidence="1">
    <location>
        <begin position="246"/>
        <end position="285"/>
    </location>
</feature>
<feature type="repeat" description="WD 6" evidence="1">
    <location>
        <begin position="288"/>
        <end position="330"/>
    </location>
</feature>
<feature type="repeat" description="WD 7" evidence="1">
    <location>
        <begin position="333"/>
        <end position="368"/>
    </location>
</feature>
<feature type="region of interest" description="Disordered" evidence="2">
    <location>
        <begin position="1"/>
        <end position="64"/>
    </location>
</feature>
<feature type="compositionally biased region" description="Low complexity" evidence="2">
    <location>
        <begin position="16"/>
        <end position="42"/>
    </location>
</feature>
<proteinExistence type="predicted"/>